<comment type="function">
    <text evidence="1">Catalyzes the initial step of the lipid cycle reactions in the biosynthesis of the cell wall peptidoglycan: transfers peptidoglycan precursor phospho-MurNAc-pentapeptide from UDP-MurNAc-pentapeptide onto the lipid carrier undecaprenyl phosphate, yielding undecaprenyl-pyrophosphoryl-MurNAc-pentapeptide, known as lipid I.</text>
</comment>
<comment type="catalytic activity">
    <reaction evidence="1">
        <text>UDP-N-acetyl-alpha-D-muramoyl-L-alanyl-gamma-D-glutamyl-meso-2,6-diaminopimeloyl-D-alanyl-D-alanine + di-trans,octa-cis-undecaprenyl phosphate = di-trans,octa-cis-undecaprenyl diphospho-N-acetyl-alpha-D-muramoyl-L-alanyl-D-glutamyl-meso-2,6-diaminopimeloyl-D-alanyl-D-alanine + UMP</text>
        <dbReference type="Rhea" id="RHEA:28386"/>
        <dbReference type="ChEBI" id="CHEBI:57865"/>
        <dbReference type="ChEBI" id="CHEBI:60392"/>
        <dbReference type="ChEBI" id="CHEBI:61386"/>
        <dbReference type="ChEBI" id="CHEBI:61387"/>
        <dbReference type="EC" id="2.7.8.13"/>
    </reaction>
</comment>
<comment type="cofactor">
    <cofactor evidence="1">
        <name>Mg(2+)</name>
        <dbReference type="ChEBI" id="CHEBI:18420"/>
    </cofactor>
</comment>
<comment type="pathway">
    <text evidence="1">Cell wall biogenesis; peptidoglycan biosynthesis.</text>
</comment>
<comment type="subcellular location">
    <subcellularLocation>
        <location evidence="1">Cell inner membrane</location>
        <topology evidence="1">Multi-pass membrane protein</topology>
    </subcellularLocation>
</comment>
<comment type="similarity">
    <text evidence="1">Belongs to the glycosyltransferase 4 family. MraY subfamily.</text>
</comment>
<name>MRAY_RHOP2</name>
<gene>
    <name evidence="1" type="primary">mraY</name>
    <name type="ordered locus">RPB_1991</name>
</gene>
<accession>Q2IYL1</accession>
<evidence type="ECO:0000255" key="1">
    <source>
        <dbReference type="HAMAP-Rule" id="MF_00038"/>
    </source>
</evidence>
<feature type="chain" id="PRO_1000003040" description="Phospho-N-acetylmuramoyl-pentapeptide-transferase">
    <location>
        <begin position="1"/>
        <end position="361"/>
    </location>
</feature>
<feature type="transmembrane region" description="Helical" evidence="1">
    <location>
        <begin position="25"/>
        <end position="45"/>
    </location>
</feature>
<feature type="transmembrane region" description="Helical" evidence="1">
    <location>
        <begin position="72"/>
        <end position="92"/>
    </location>
</feature>
<feature type="transmembrane region" description="Helical" evidence="1">
    <location>
        <begin position="95"/>
        <end position="115"/>
    </location>
</feature>
<feature type="transmembrane region" description="Helical" evidence="1">
    <location>
        <begin position="135"/>
        <end position="155"/>
    </location>
</feature>
<feature type="transmembrane region" description="Helical" evidence="1">
    <location>
        <begin position="169"/>
        <end position="189"/>
    </location>
</feature>
<feature type="transmembrane region" description="Helical" evidence="1">
    <location>
        <begin position="200"/>
        <end position="220"/>
    </location>
</feature>
<feature type="transmembrane region" description="Helical" evidence="1">
    <location>
        <begin position="240"/>
        <end position="260"/>
    </location>
</feature>
<feature type="transmembrane region" description="Helical" evidence="1">
    <location>
        <begin position="264"/>
        <end position="284"/>
    </location>
</feature>
<feature type="transmembrane region" description="Helical" evidence="1">
    <location>
        <begin position="289"/>
        <end position="309"/>
    </location>
</feature>
<feature type="transmembrane region" description="Helical" evidence="1">
    <location>
        <begin position="338"/>
        <end position="358"/>
    </location>
</feature>
<dbReference type="EC" id="2.7.8.13" evidence="1"/>
<dbReference type="EMBL" id="CP000250">
    <property type="protein sequence ID" value="ABD06699.1"/>
    <property type="molecule type" value="Genomic_DNA"/>
</dbReference>
<dbReference type="RefSeq" id="WP_011440887.1">
    <property type="nucleotide sequence ID" value="NC_007778.1"/>
</dbReference>
<dbReference type="SMR" id="Q2IYL1"/>
<dbReference type="STRING" id="316058.RPB_1991"/>
<dbReference type="KEGG" id="rpb:RPB_1991"/>
<dbReference type="eggNOG" id="COG0472">
    <property type="taxonomic scope" value="Bacteria"/>
</dbReference>
<dbReference type="HOGENOM" id="CLU_023982_0_0_5"/>
<dbReference type="OrthoDB" id="9805475at2"/>
<dbReference type="UniPathway" id="UPA00219"/>
<dbReference type="Proteomes" id="UP000008809">
    <property type="component" value="Chromosome"/>
</dbReference>
<dbReference type="GO" id="GO:0005886">
    <property type="term" value="C:plasma membrane"/>
    <property type="evidence" value="ECO:0007669"/>
    <property type="project" value="UniProtKB-SubCell"/>
</dbReference>
<dbReference type="GO" id="GO:0046872">
    <property type="term" value="F:metal ion binding"/>
    <property type="evidence" value="ECO:0007669"/>
    <property type="project" value="UniProtKB-KW"/>
</dbReference>
<dbReference type="GO" id="GO:0008963">
    <property type="term" value="F:phospho-N-acetylmuramoyl-pentapeptide-transferase activity"/>
    <property type="evidence" value="ECO:0007669"/>
    <property type="project" value="UniProtKB-UniRule"/>
</dbReference>
<dbReference type="GO" id="GO:0051992">
    <property type="term" value="F:UDP-N-acetylmuramoyl-L-alanyl-D-glutamyl-meso-2,6-diaminopimelyl-D-alanyl-D-alanine:undecaprenyl-phosphate transferase activity"/>
    <property type="evidence" value="ECO:0007669"/>
    <property type="project" value="RHEA"/>
</dbReference>
<dbReference type="GO" id="GO:0051301">
    <property type="term" value="P:cell division"/>
    <property type="evidence" value="ECO:0007669"/>
    <property type="project" value="UniProtKB-KW"/>
</dbReference>
<dbReference type="GO" id="GO:0071555">
    <property type="term" value="P:cell wall organization"/>
    <property type="evidence" value="ECO:0007669"/>
    <property type="project" value="UniProtKB-KW"/>
</dbReference>
<dbReference type="GO" id="GO:0009252">
    <property type="term" value="P:peptidoglycan biosynthetic process"/>
    <property type="evidence" value="ECO:0007669"/>
    <property type="project" value="UniProtKB-UniRule"/>
</dbReference>
<dbReference type="GO" id="GO:0008360">
    <property type="term" value="P:regulation of cell shape"/>
    <property type="evidence" value="ECO:0007669"/>
    <property type="project" value="UniProtKB-KW"/>
</dbReference>
<dbReference type="CDD" id="cd06852">
    <property type="entry name" value="GT_MraY"/>
    <property type="match status" value="1"/>
</dbReference>
<dbReference type="HAMAP" id="MF_00038">
    <property type="entry name" value="MraY"/>
    <property type="match status" value="1"/>
</dbReference>
<dbReference type="InterPro" id="IPR000715">
    <property type="entry name" value="Glycosyl_transferase_4"/>
</dbReference>
<dbReference type="InterPro" id="IPR003524">
    <property type="entry name" value="PNAcMuramoyl-5peptid_Trfase"/>
</dbReference>
<dbReference type="InterPro" id="IPR018480">
    <property type="entry name" value="PNAcMuramoyl-5peptid_Trfase_CS"/>
</dbReference>
<dbReference type="NCBIfam" id="TIGR00445">
    <property type="entry name" value="mraY"/>
    <property type="match status" value="1"/>
</dbReference>
<dbReference type="PANTHER" id="PTHR22926">
    <property type="entry name" value="PHOSPHO-N-ACETYLMURAMOYL-PENTAPEPTIDE-TRANSFERASE"/>
    <property type="match status" value="1"/>
</dbReference>
<dbReference type="PANTHER" id="PTHR22926:SF5">
    <property type="entry name" value="PHOSPHO-N-ACETYLMURAMOYL-PENTAPEPTIDE-TRANSFERASE HOMOLOG"/>
    <property type="match status" value="1"/>
</dbReference>
<dbReference type="Pfam" id="PF00953">
    <property type="entry name" value="Glycos_transf_4"/>
    <property type="match status" value="1"/>
</dbReference>
<dbReference type="Pfam" id="PF10555">
    <property type="entry name" value="MraY_sig1"/>
    <property type="match status" value="1"/>
</dbReference>
<dbReference type="PROSITE" id="PS01347">
    <property type="entry name" value="MRAY_1"/>
    <property type="match status" value="1"/>
</dbReference>
<dbReference type="PROSITE" id="PS01348">
    <property type="entry name" value="MRAY_2"/>
    <property type="match status" value="1"/>
</dbReference>
<proteinExistence type="inferred from homology"/>
<organism>
    <name type="scientific">Rhodopseudomonas palustris (strain HaA2)</name>
    <dbReference type="NCBI Taxonomy" id="316058"/>
    <lineage>
        <taxon>Bacteria</taxon>
        <taxon>Pseudomonadati</taxon>
        <taxon>Pseudomonadota</taxon>
        <taxon>Alphaproteobacteria</taxon>
        <taxon>Hyphomicrobiales</taxon>
        <taxon>Nitrobacteraceae</taxon>
        <taxon>Rhodopseudomonas</taxon>
    </lineage>
</organism>
<sequence length="361" mass="38699">MLYWLIDFSSSFPAFNVFRYITFRTGGAVVTGALFVFLCGPWIIDNLRLRQGKGQPIRADGPQSHLVTKRGTPTMGGLMILSGLTVGTVLWANPLNPYVWIVLAVTLGFGFVGFYDDYMKVTKQTHAGISGRTRLLIEFAIAGAACFALVWLGRGSLSSSLVIPFFKEVVLNLGWYFVIFGAFVIVGAGNAVNLTDGLDGLAIVPVMIAAASFGMISYLVGNAVFAEYLQINYVAGTGELAVLCGALLGAGLGFLWFNAPPASIFMGDTGSLALGGMLGSIAVAVKHEIVLAVIGGLFVLEAVSVIVQVASFKLTGKRVFRMAPIHHHFEQKGWTEPQIVIRFWIIAVILALAGLSTLKLR</sequence>
<protein>
    <recommendedName>
        <fullName evidence="1">Phospho-N-acetylmuramoyl-pentapeptide-transferase</fullName>
        <ecNumber evidence="1">2.7.8.13</ecNumber>
    </recommendedName>
    <alternativeName>
        <fullName evidence="1">UDP-MurNAc-pentapeptide phosphotransferase</fullName>
    </alternativeName>
</protein>
<keyword id="KW-0131">Cell cycle</keyword>
<keyword id="KW-0132">Cell division</keyword>
<keyword id="KW-0997">Cell inner membrane</keyword>
<keyword id="KW-1003">Cell membrane</keyword>
<keyword id="KW-0133">Cell shape</keyword>
<keyword id="KW-0961">Cell wall biogenesis/degradation</keyword>
<keyword id="KW-0460">Magnesium</keyword>
<keyword id="KW-0472">Membrane</keyword>
<keyword id="KW-0479">Metal-binding</keyword>
<keyword id="KW-0573">Peptidoglycan synthesis</keyword>
<keyword id="KW-1185">Reference proteome</keyword>
<keyword id="KW-0808">Transferase</keyword>
<keyword id="KW-0812">Transmembrane</keyword>
<keyword id="KW-1133">Transmembrane helix</keyword>
<reference key="1">
    <citation type="submission" date="2006-01" db="EMBL/GenBank/DDBJ databases">
        <title>Complete sequence of Rhodopseudomonas palustris HaA2.</title>
        <authorList>
            <consortium name="US DOE Joint Genome Institute"/>
            <person name="Copeland A."/>
            <person name="Lucas S."/>
            <person name="Lapidus A."/>
            <person name="Barry K."/>
            <person name="Detter J.C."/>
            <person name="Glavina T."/>
            <person name="Hammon N."/>
            <person name="Israni S."/>
            <person name="Pitluck S."/>
            <person name="Chain P."/>
            <person name="Malfatti S."/>
            <person name="Shin M."/>
            <person name="Vergez L."/>
            <person name="Schmutz J."/>
            <person name="Larimer F."/>
            <person name="Land M."/>
            <person name="Hauser L."/>
            <person name="Pelletier D.A."/>
            <person name="Kyrpides N."/>
            <person name="Anderson I."/>
            <person name="Oda Y."/>
            <person name="Harwood C.S."/>
            <person name="Richardson P."/>
        </authorList>
    </citation>
    <scope>NUCLEOTIDE SEQUENCE [LARGE SCALE GENOMIC DNA]</scope>
    <source>
        <strain>HaA2</strain>
    </source>
</reference>